<name>PTH_EDWI9</name>
<accession>C5B806</accession>
<reference key="1">
    <citation type="submission" date="2009-03" db="EMBL/GenBank/DDBJ databases">
        <title>Complete genome sequence of Edwardsiella ictaluri 93-146.</title>
        <authorList>
            <person name="Williams M.L."/>
            <person name="Gillaspy A.F."/>
            <person name="Dyer D.W."/>
            <person name="Thune R.L."/>
            <person name="Waldbieser G.C."/>
            <person name="Schuster S.C."/>
            <person name="Gipson J."/>
            <person name="Zaitshik J."/>
            <person name="Landry C."/>
            <person name="Lawrence M.L."/>
        </authorList>
    </citation>
    <scope>NUCLEOTIDE SEQUENCE [LARGE SCALE GENOMIC DNA]</scope>
    <source>
        <strain>93-146</strain>
    </source>
</reference>
<feature type="chain" id="PRO_1000202581" description="Peptidyl-tRNA hydrolase">
    <location>
        <begin position="1"/>
        <end position="196"/>
    </location>
</feature>
<feature type="active site" description="Proton acceptor" evidence="1">
    <location>
        <position position="21"/>
    </location>
</feature>
<feature type="binding site" evidence="1">
    <location>
        <position position="16"/>
    </location>
    <ligand>
        <name>tRNA</name>
        <dbReference type="ChEBI" id="CHEBI:17843"/>
    </ligand>
</feature>
<feature type="binding site" evidence="1">
    <location>
        <position position="67"/>
    </location>
    <ligand>
        <name>tRNA</name>
        <dbReference type="ChEBI" id="CHEBI:17843"/>
    </ligand>
</feature>
<feature type="binding site" evidence="1">
    <location>
        <position position="69"/>
    </location>
    <ligand>
        <name>tRNA</name>
        <dbReference type="ChEBI" id="CHEBI:17843"/>
    </ligand>
</feature>
<feature type="binding site" evidence="1">
    <location>
        <position position="115"/>
    </location>
    <ligand>
        <name>tRNA</name>
        <dbReference type="ChEBI" id="CHEBI:17843"/>
    </ligand>
</feature>
<feature type="site" description="Discriminates between blocked and unblocked aminoacyl-tRNA" evidence="1">
    <location>
        <position position="11"/>
    </location>
</feature>
<feature type="site" description="Stabilizes the basic form of H active site to accept a proton" evidence="1">
    <location>
        <position position="94"/>
    </location>
</feature>
<sequence length="196" mass="21079">MTIKLIVGLANPGAEYAQTRHNAGAWFVDALAERHGQSLKEESKFFGYTARLSLAGHDLRLLVPTTFMNLSGKAVSALAGFYRIAPDEILVAHDELDLPPGVAKLKLGGGNGGHNGLKDIQSKLGNNPNFHRLRIGIGHPGDKSKVVGFVLGKPLASEQPLIDDAIDEALRCTDLLMQDGMDKAMNRLNGFRASAR</sequence>
<gene>
    <name evidence="1" type="primary">pth</name>
    <name type="ordered locus">NT01EI_1556</name>
</gene>
<dbReference type="EC" id="3.1.1.29" evidence="1"/>
<dbReference type="EMBL" id="CP001600">
    <property type="protein sequence ID" value="ACR68742.1"/>
    <property type="molecule type" value="Genomic_DNA"/>
</dbReference>
<dbReference type="RefSeq" id="WP_015870901.1">
    <property type="nucleotide sequence ID" value="NZ_CP169062.1"/>
</dbReference>
<dbReference type="SMR" id="C5B806"/>
<dbReference type="GeneID" id="69538535"/>
<dbReference type="KEGG" id="eic:NT01EI_1556"/>
<dbReference type="PATRIC" id="fig|634503.3.peg.1391"/>
<dbReference type="HOGENOM" id="CLU_062456_3_1_6"/>
<dbReference type="Proteomes" id="UP000001485">
    <property type="component" value="Chromosome"/>
</dbReference>
<dbReference type="GO" id="GO:0005737">
    <property type="term" value="C:cytoplasm"/>
    <property type="evidence" value="ECO:0007669"/>
    <property type="project" value="UniProtKB-SubCell"/>
</dbReference>
<dbReference type="GO" id="GO:0004045">
    <property type="term" value="F:peptidyl-tRNA hydrolase activity"/>
    <property type="evidence" value="ECO:0007669"/>
    <property type="project" value="UniProtKB-UniRule"/>
</dbReference>
<dbReference type="GO" id="GO:0000049">
    <property type="term" value="F:tRNA binding"/>
    <property type="evidence" value="ECO:0007669"/>
    <property type="project" value="UniProtKB-UniRule"/>
</dbReference>
<dbReference type="GO" id="GO:0006515">
    <property type="term" value="P:protein quality control for misfolded or incompletely synthesized proteins"/>
    <property type="evidence" value="ECO:0007669"/>
    <property type="project" value="UniProtKB-UniRule"/>
</dbReference>
<dbReference type="GO" id="GO:0072344">
    <property type="term" value="P:rescue of stalled ribosome"/>
    <property type="evidence" value="ECO:0007669"/>
    <property type="project" value="UniProtKB-UniRule"/>
</dbReference>
<dbReference type="CDD" id="cd00462">
    <property type="entry name" value="PTH"/>
    <property type="match status" value="1"/>
</dbReference>
<dbReference type="FunFam" id="3.40.50.1470:FF:000001">
    <property type="entry name" value="Peptidyl-tRNA hydrolase"/>
    <property type="match status" value="1"/>
</dbReference>
<dbReference type="Gene3D" id="3.40.50.1470">
    <property type="entry name" value="Peptidyl-tRNA hydrolase"/>
    <property type="match status" value="1"/>
</dbReference>
<dbReference type="HAMAP" id="MF_00083">
    <property type="entry name" value="Pept_tRNA_hydro_bact"/>
    <property type="match status" value="1"/>
</dbReference>
<dbReference type="InterPro" id="IPR001328">
    <property type="entry name" value="Pept_tRNA_hydro"/>
</dbReference>
<dbReference type="InterPro" id="IPR018171">
    <property type="entry name" value="Pept_tRNA_hydro_CS"/>
</dbReference>
<dbReference type="InterPro" id="IPR036416">
    <property type="entry name" value="Pept_tRNA_hydro_sf"/>
</dbReference>
<dbReference type="NCBIfam" id="TIGR00447">
    <property type="entry name" value="pth"/>
    <property type="match status" value="1"/>
</dbReference>
<dbReference type="PANTHER" id="PTHR17224">
    <property type="entry name" value="PEPTIDYL-TRNA HYDROLASE"/>
    <property type="match status" value="1"/>
</dbReference>
<dbReference type="PANTHER" id="PTHR17224:SF1">
    <property type="entry name" value="PEPTIDYL-TRNA HYDROLASE"/>
    <property type="match status" value="1"/>
</dbReference>
<dbReference type="Pfam" id="PF01195">
    <property type="entry name" value="Pept_tRNA_hydro"/>
    <property type="match status" value="1"/>
</dbReference>
<dbReference type="SUPFAM" id="SSF53178">
    <property type="entry name" value="Peptidyl-tRNA hydrolase-like"/>
    <property type="match status" value="1"/>
</dbReference>
<dbReference type="PROSITE" id="PS01195">
    <property type="entry name" value="PEPT_TRNA_HYDROL_1"/>
    <property type="match status" value="1"/>
</dbReference>
<dbReference type="PROSITE" id="PS01196">
    <property type="entry name" value="PEPT_TRNA_HYDROL_2"/>
    <property type="match status" value="1"/>
</dbReference>
<organism>
    <name type="scientific">Edwardsiella ictaluri (strain 93-146)</name>
    <dbReference type="NCBI Taxonomy" id="634503"/>
    <lineage>
        <taxon>Bacteria</taxon>
        <taxon>Pseudomonadati</taxon>
        <taxon>Pseudomonadota</taxon>
        <taxon>Gammaproteobacteria</taxon>
        <taxon>Enterobacterales</taxon>
        <taxon>Hafniaceae</taxon>
        <taxon>Edwardsiella</taxon>
    </lineage>
</organism>
<protein>
    <recommendedName>
        <fullName evidence="1">Peptidyl-tRNA hydrolase</fullName>
        <shortName evidence="1">Pth</shortName>
        <ecNumber evidence="1">3.1.1.29</ecNumber>
    </recommendedName>
</protein>
<comment type="function">
    <text evidence="1">Hydrolyzes ribosome-free peptidyl-tRNAs (with 1 or more amino acids incorporated), which drop off the ribosome during protein synthesis, or as a result of ribosome stalling.</text>
</comment>
<comment type="function">
    <text evidence="1">Catalyzes the release of premature peptidyl moieties from peptidyl-tRNA molecules trapped in stalled 50S ribosomal subunits, and thus maintains levels of free tRNAs and 50S ribosomes.</text>
</comment>
<comment type="catalytic activity">
    <reaction evidence="1">
        <text>an N-acyl-L-alpha-aminoacyl-tRNA + H2O = an N-acyl-L-amino acid + a tRNA + H(+)</text>
        <dbReference type="Rhea" id="RHEA:54448"/>
        <dbReference type="Rhea" id="RHEA-COMP:10123"/>
        <dbReference type="Rhea" id="RHEA-COMP:13883"/>
        <dbReference type="ChEBI" id="CHEBI:15377"/>
        <dbReference type="ChEBI" id="CHEBI:15378"/>
        <dbReference type="ChEBI" id="CHEBI:59874"/>
        <dbReference type="ChEBI" id="CHEBI:78442"/>
        <dbReference type="ChEBI" id="CHEBI:138191"/>
        <dbReference type="EC" id="3.1.1.29"/>
    </reaction>
</comment>
<comment type="subunit">
    <text evidence="1">Monomer.</text>
</comment>
<comment type="subcellular location">
    <subcellularLocation>
        <location evidence="1">Cytoplasm</location>
    </subcellularLocation>
</comment>
<comment type="similarity">
    <text evidence="1">Belongs to the PTH family.</text>
</comment>
<proteinExistence type="inferred from homology"/>
<keyword id="KW-0963">Cytoplasm</keyword>
<keyword id="KW-0378">Hydrolase</keyword>
<keyword id="KW-0694">RNA-binding</keyword>
<keyword id="KW-0820">tRNA-binding</keyword>
<evidence type="ECO:0000255" key="1">
    <source>
        <dbReference type="HAMAP-Rule" id="MF_00083"/>
    </source>
</evidence>